<feature type="chain" id="PRO_0000368557" description="ATP synthase subunit b">
    <location>
        <begin position="1"/>
        <end position="190"/>
    </location>
</feature>
<feature type="transmembrane region" description="Helical" evidence="1">
    <location>
        <begin position="24"/>
        <end position="44"/>
    </location>
</feature>
<keyword id="KW-0066">ATP synthesis</keyword>
<keyword id="KW-1003">Cell membrane</keyword>
<keyword id="KW-0138">CF(0)</keyword>
<keyword id="KW-0375">Hydrogen ion transport</keyword>
<keyword id="KW-0406">Ion transport</keyword>
<keyword id="KW-0472">Membrane</keyword>
<keyword id="KW-1185">Reference proteome</keyword>
<keyword id="KW-0812">Transmembrane</keyword>
<keyword id="KW-1133">Transmembrane helix</keyword>
<keyword id="KW-0813">Transport</keyword>
<evidence type="ECO:0000255" key="1">
    <source>
        <dbReference type="HAMAP-Rule" id="MF_01398"/>
    </source>
</evidence>
<comment type="function">
    <text evidence="1">F(1)F(0) ATP synthase produces ATP from ADP in the presence of a proton or sodium gradient. F-type ATPases consist of two structural domains, F(1) containing the extramembraneous catalytic core and F(0) containing the membrane proton channel, linked together by a central stalk and a peripheral stalk. During catalysis, ATP synthesis in the catalytic domain of F(1) is coupled via a rotary mechanism of the central stalk subunits to proton translocation.</text>
</comment>
<comment type="function">
    <text evidence="1">Component of the F(0) channel, it forms part of the peripheral stalk, linking F(1) to F(0).</text>
</comment>
<comment type="subunit">
    <text evidence="1">F-type ATPases have 2 components, F(1) - the catalytic core - and F(0) - the membrane proton channel. F(1) has five subunits: alpha(3), beta(3), gamma(1), delta(1), epsilon(1). F(0) has three main subunits: a(1), b(2) and c(10-14). The alpha and beta chains form an alternating ring which encloses part of the gamma chain. F(1) is attached to F(0) by a central stalk formed by the gamma and epsilon chains, while a peripheral stalk is formed by the delta and b chains.</text>
</comment>
<comment type="subcellular location">
    <subcellularLocation>
        <location evidence="1">Cell membrane</location>
        <topology evidence="1">Single-pass membrane protein</topology>
    </subcellularLocation>
</comment>
<comment type="similarity">
    <text evidence="1">Belongs to the ATPase B chain family.</text>
</comment>
<sequence>MLSSVVIAASEEQHNPLIPEPADIVGSLICFVVILFFFWKLVLPRVKKLLDERAEAIEGNIAKADEAQHKAEALLEEYTAQLAEARADAAKIREQARTDGQKIVAEAKDTATAEAARVTASAQAQIEAERQTALVSLRGEVGSLAIDIASGVVGEVLTEDKKAQAIVDRFLADLEASEKATSNEKAGTAN</sequence>
<dbReference type="EMBL" id="AE016822">
    <property type="protein sequence ID" value="AAT88633.1"/>
    <property type="molecule type" value="Genomic_DNA"/>
</dbReference>
<dbReference type="RefSeq" id="WP_011185632.1">
    <property type="nucleotide sequence ID" value="NC_006087.1"/>
</dbReference>
<dbReference type="SMR" id="Q6AG62"/>
<dbReference type="STRING" id="281090.Lxx07010"/>
<dbReference type="KEGG" id="lxx:Lxx07010"/>
<dbReference type="eggNOG" id="COG0711">
    <property type="taxonomic scope" value="Bacteria"/>
</dbReference>
<dbReference type="HOGENOM" id="CLU_079215_5_2_11"/>
<dbReference type="Proteomes" id="UP000001306">
    <property type="component" value="Chromosome"/>
</dbReference>
<dbReference type="GO" id="GO:0005886">
    <property type="term" value="C:plasma membrane"/>
    <property type="evidence" value="ECO:0007669"/>
    <property type="project" value="UniProtKB-SubCell"/>
</dbReference>
<dbReference type="GO" id="GO:0045259">
    <property type="term" value="C:proton-transporting ATP synthase complex"/>
    <property type="evidence" value="ECO:0007669"/>
    <property type="project" value="UniProtKB-KW"/>
</dbReference>
<dbReference type="GO" id="GO:0046933">
    <property type="term" value="F:proton-transporting ATP synthase activity, rotational mechanism"/>
    <property type="evidence" value="ECO:0007669"/>
    <property type="project" value="UniProtKB-UniRule"/>
</dbReference>
<dbReference type="GO" id="GO:0046961">
    <property type="term" value="F:proton-transporting ATPase activity, rotational mechanism"/>
    <property type="evidence" value="ECO:0007669"/>
    <property type="project" value="TreeGrafter"/>
</dbReference>
<dbReference type="CDD" id="cd06503">
    <property type="entry name" value="ATP-synt_Fo_b"/>
    <property type="match status" value="1"/>
</dbReference>
<dbReference type="Gene3D" id="1.20.5.620">
    <property type="entry name" value="F1F0 ATP synthase subunit B, membrane domain"/>
    <property type="match status" value="1"/>
</dbReference>
<dbReference type="HAMAP" id="MF_01398">
    <property type="entry name" value="ATP_synth_b_bprime"/>
    <property type="match status" value="1"/>
</dbReference>
<dbReference type="InterPro" id="IPR028987">
    <property type="entry name" value="ATP_synth_B-like_membr_sf"/>
</dbReference>
<dbReference type="InterPro" id="IPR002146">
    <property type="entry name" value="ATP_synth_b/b'su_bac/chlpt"/>
</dbReference>
<dbReference type="InterPro" id="IPR005864">
    <property type="entry name" value="ATP_synth_F0_bsu_bac"/>
</dbReference>
<dbReference type="InterPro" id="IPR050059">
    <property type="entry name" value="ATP_synthase_B_chain"/>
</dbReference>
<dbReference type="NCBIfam" id="TIGR01144">
    <property type="entry name" value="ATP_synt_b"/>
    <property type="match status" value="1"/>
</dbReference>
<dbReference type="NCBIfam" id="NF004412">
    <property type="entry name" value="PRK05759.1-3"/>
    <property type="match status" value="1"/>
</dbReference>
<dbReference type="PANTHER" id="PTHR33445:SF1">
    <property type="entry name" value="ATP SYNTHASE SUBUNIT B"/>
    <property type="match status" value="1"/>
</dbReference>
<dbReference type="PANTHER" id="PTHR33445">
    <property type="entry name" value="ATP SYNTHASE SUBUNIT B', CHLOROPLASTIC"/>
    <property type="match status" value="1"/>
</dbReference>
<dbReference type="Pfam" id="PF00430">
    <property type="entry name" value="ATP-synt_B"/>
    <property type="match status" value="1"/>
</dbReference>
<dbReference type="SUPFAM" id="SSF81573">
    <property type="entry name" value="F1F0 ATP synthase subunit B, membrane domain"/>
    <property type="match status" value="1"/>
</dbReference>
<gene>
    <name evidence="1" type="primary">atpF</name>
    <name type="ordered locus">Lxx07010</name>
</gene>
<protein>
    <recommendedName>
        <fullName evidence="1">ATP synthase subunit b</fullName>
    </recommendedName>
    <alternativeName>
        <fullName evidence="1">ATP synthase F(0) sector subunit b</fullName>
    </alternativeName>
    <alternativeName>
        <fullName evidence="1">ATPase subunit I</fullName>
    </alternativeName>
    <alternativeName>
        <fullName evidence="1">F-type ATPase subunit b</fullName>
        <shortName evidence="1">F-ATPase subunit b</shortName>
    </alternativeName>
</protein>
<proteinExistence type="inferred from homology"/>
<organism>
    <name type="scientific">Leifsonia xyli subsp. xyli (strain CTCB07)</name>
    <dbReference type="NCBI Taxonomy" id="281090"/>
    <lineage>
        <taxon>Bacteria</taxon>
        <taxon>Bacillati</taxon>
        <taxon>Actinomycetota</taxon>
        <taxon>Actinomycetes</taxon>
        <taxon>Micrococcales</taxon>
        <taxon>Microbacteriaceae</taxon>
        <taxon>Leifsonia</taxon>
    </lineage>
</organism>
<accession>Q6AG62</accession>
<name>ATPF_LEIXX</name>
<reference key="1">
    <citation type="journal article" date="2004" name="Mol. Plant Microbe Interact.">
        <title>The genome sequence of the Gram-positive sugarcane pathogen Leifsonia xyli subsp. xyli.</title>
        <authorList>
            <person name="Monteiro-Vitorello C.B."/>
            <person name="Camargo L.E.A."/>
            <person name="Van Sluys M.A."/>
            <person name="Kitajima J.P."/>
            <person name="Truffi D."/>
            <person name="do Amaral A.M."/>
            <person name="Harakava R."/>
            <person name="de Oliveira J.C.F."/>
            <person name="Wood D."/>
            <person name="de Oliveira M.C."/>
            <person name="Miyaki C.Y."/>
            <person name="Takita M.A."/>
            <person name="da Silva A.C.R."/>
            <person name="Furlan L.R."/>
            <person name="Carraro D.M."/>
            <person name="Camarotte G."/>
            <person name="Almeida N.F. Jr."/>
            <person name="Carrer H."/>
            <person name="Coutinho L.L."/>
            <person name="El-Dorry H.A."/>
            <person name="Ferro M.I.T."/>
            <person name="Gagliardi P.R."/>
            <person name="Giglioti E."/>
            <person name="Goldman M.H.S."/>
            <person name="Goldman G.H."/>
            <person name="Kimura E.T."/>
            <person name="Ferro E.S."/>
            <person name="Kuramae E.E."/>
            <person name="Lemos E.G.M."/>
            <person name="Lemos M.V.F."/>
            <person name="Mauro S.M.Z."/>
            <person name="Machado M.A."/>
            <person name="Marino C.L."/>
            <person name="Menck C.F."/>
            <person name="Nunes L.R."/>
            <person name="Oliveira R.C."/>
            <person name="Pereira G.G."/>
            <person name="Siqueira W."/>
            <person name="de Souza A.A."/>
            <person name="Tsai S.M."/>
            <person name="Zanca A.S."/>
            <person name="Simpson A.J.G."/>
            <person name="Brumbley S.M."/>
            <person name="Setubal J.C."/>
        </authorList>
    </citation>
    <scope>NUCLEOTIDE SEQUENCE [LARGE SCALE GENOMIC DNA]</scope>
    <source>
        <strain>CTCB07</strain>
    </source>
</reference>